<organism>
    <name type="scientific">Tobacco mosaic virus (strain Rakkyo)</name>
    <name type="common">TMV-R</name>
    <dbReference type="NCBI Taxonomy" id="138310"/>
    <lineage>
        <taxon>Viruses</taxon>
        <taxon>Riboviria</taxon>
        <taxon>Orthornavirae</taxon>
        <taxon>Kitrinoviricota</taxon>
        <taxon>Alsuviricetes</taxon>
        <taxon>Martellivirales</taxon>
        <taxon>Virgaviridae</taxon>
        <taxon>Tobamovirus</taxon>
        <taxon>Tobacco mosaic virus</taxon>
    </lineage>
</organism>
<accession>Q98747</accession>
<organismHost>
    <name type="scientific">Allium chinense</name>
    <dbReference type="NCBI Taxonomy" id="130426"/>
</organismHost>
<organismHost>
    <name type="scientific">Nicotiana tabacum</name>
    <name type="common">Common tobacco</name>
    <dbReference type="NCBI Taxonomy" id="4097"/>
</organismHost>
<name>CAPSD_TMVRA</name>
<protein>
    <recommendedName>
        <fullName>Capsid protein</fullName>
    </recommendedName>
    <alternativeName>
        <fullName>Coat protein</fullName>
    </alternativeName>
</protein>
<keyword id="KW-0007">Acetylation</keyword>
<keyword id="KW-0167">Capsid protein</keyword>
<keyword id="KW-1139">Helical capsid protein</keyword>
<keyword id="KW-0946">Virion</keyword>
<proteinExistence type="inferred from homology"/>
<sequence length="159" mass="17652">MSYNINTPSQFVFLSSAWADPIELINLCTNALGNQFQTQQARTVVQRQFSEVWKPSPQVTVRFPDSDFKVYRFNAVLDPLVTALLGAFDTRNRIIEVENQANPSTAETLDATRRVDDATVAIRSAINNLIVELTRGTGSYNRSSFESSSGLVWTSSPAT</sequence>
<comment type="function">
    <text>Capsid protein self-assembles to form rod-shaped virions about 18 nm in diameter with a central canal enclosing the viral genomic RNA.</text>
</comment>
<comment type="subcellular location">
    <subcellularLocation>
        <location evidence="2">Virion</location>
    </subcellularLocation>
</comment>
<comment type="similarity">
    <text evidence="2">Belongs to the virgaviridae capsid protein family.</text>
</comment>
<gene>
    <name type="primary">CP</name>
</gene>
<reference key="1">
    <citation type="journal article" date="1996" name="Arch. Virol.">
        <title>Complete nucleotide sequence and synthesis of infectious in vitro transcripts from a full-length cDNA clone of a rakkyo strain of tobacco mosaic virus.</title>
        <authorList>
            <person name="Chen J."/>
            <person name="Watanabe Y."/>
            <person name="Sako N."/>
            <person name="Ohsima K."/>
            <person name="Okada Y."/>
        </authorList>
    </citation>
    <scope>NUCLEOTIDE SEQUENCE [GENOMIC RNA]</scope>
</reference>
<feature type="initiator methionine" description="Removed; by host" evidence="1">
    <location>
        <position position="1"/>
    </location>
</feature>
<feature type="chain" id="PRO_0000144927" description="Capsid protein">
    <location>
        <begin position="2"/>
        <end position="159"/>
    </location>
</feature>
<feature type="modified residue" description="N-acetylserine; by host" evidence="1">
    <location>
        <position position="2"/>
    </location>
</feature>
<dbReference type="EMBL" id="D63809">
    <property type="protein sequence ID" value="BAA09879.1"/>
    <property type="molecule type" value="Genomic_RNA"/>
</dbReference>
<dbReference type="SMR" id="Q98747"/>
<dbReference type="Proteomes" id="UP000008251">
    <property type="component" value="Genome"/>
</dbReference>
<dbReference type="GO" id="GO:0019029">
    <property type="term" value="C:helical viral capsid"/>
    <property type="evidence" value="ECO:0007669"/>
    <property type="project" value="UniProtKB-KW"/>
</dbReference>
<dbReference type="GO" id="GO:0005198">
    <property type="term" value="F:structural molecule activity"/>
    <property type="evidence" value="ECO:0007669"/>
    <property type="project" value="InterPro"/>
</dbReference>
<dbReference type="Gene3D" id="1.20.120.70">
    <property type="entry name" value="Tobacco mosaic virus-like, coat protein"/>
    <property type="match status" value="1"/>
</dbReference>
<dbReference type="InterPro" id="IPR001337">
    <property type="entry name" value="TMV-like_coat"/>
</dbReference>
<dbReference type="InterPro" id="IPR036417">
    <property type="entry name" value="TMV-like_coat_sf"/>
</dbReference>
<dbReference type="Pfam" id="PF00721">
    <property type="entry name" value="TMV_coat"/>
    <property type="match status" value="1"/>
</dbReference>
<dbReference type="SUPFAM" id="SSF47195">
    <property type="entry name" value="TMV-like viral coat proteins"/>
    <property type="match status" value="1"/>
</dbReference>
<evidence type="ECO:0000250" key="1"/>
<evidence type="ECO:0000305" key="2"/>